<gene>
    <name evidence="1" type="primary">recO</name>
    <name type="ordered locus">SACE_1492</name>
</gene>
<organism>
    <name type="scientific">Saccharopolyspora erythraea (strain ATCC 11635 / DSM 40517 / JCM 4748 / NBRC 13426 / NCIMB 8594 / NRRL 2338)</name>
    <dbReference type="NCBI Taxonomy" id="405948"/>
    <lineage>
        <taxon>Bacteria</taxon>
        <taxon>Bacillati</taxon>
        <taxon>Actinomycetota</taxon>
        <taxon>Actinomycetes</taxon>
        <taxon>Pseudonocardiales</taxon>
        <taxon>Pseudonocardiaceae</taxon>
        <taxon>Saccharopolyspora</taxon>
    </lineage>
</organism>
<protein>
    <recommendedName>
        <fullName evidence="1">DNA repair protein RecO</fullName>
    </recommendedName>
    <alternativeName>
        <fullName evidence="1">Recombination protein O</fullName>
    </alternativeName>
</protein>
<name>RECO_SACEN</name>
<dbReference type="EMBL" id="AM420293">
    <property type="protein sequence ID" value="CAM00814.1"/>
    <property type="molecule type" value="Genomic_DNA"/>
</dbReference>
<dbReference type="RefSeq" id="WP_009948039.1">
    <property type="nucleotide sequence ID" value="NC_009142.1"/>
</dbReference>
<dbReference type="SMR" id="A4F9T9"/>
<dbReference type="STRING" id="405948.SACE_1492"/>
<dbReference type="KEGG" id="sen:SACE_1492"/>
<dbReference type="eggNOG" id="COG1381">
    <property type="taxonomic scope" value="Bacteria"/>
</dbReference>
<dbReference type="HOGENOM" id="CLU_066632_1_1_11"/>
<dbReference type="OrthoDB" id="9812244at2"/>
<dbReference type="Proteomes" id="UP000006728">
    <property type="component" value="Chromosome"/>
</dbReference>
<dbReference type="GO" id="GO:0043590">
    <property type="term" value="C:bacterial nucleoid"/>
    <property type="evidence" value="ECO:0007669"/>
    <property type="project" value="TreeGrafter"/>
</dbReference>
<dbReference type="GO" id="GO:0006310">
    <property type="term" value="P:DNA recombination"/>
    <property type="evidence" value="ECO:0007669"/>
    <property type="project" value="UniProtKB-UniRule"/>
</dbReference>
<dbReference type="GO" id="GO:0006302">
    <property type="term" value="P:double-strand break repair"/>
    <property type="evidence" value="ECO:0007669"/>
    <property type="project" value="TreeGrafter"/>
</dbReference>
<dbReference type="Gene3D" id="2.40.50.140">
    <property type="entry name" value="Nucleic acid-binding proteins"/>
    <property type="match status" value="1"/>
</dbReference>
<dbReference type="Gene3D" id="1.20.1440.120">
    <property type="entry name" value="Recombination protein O, C-terminal domain"/>
    <property type="match status" value="1"/>
</dbReference>
<dbReference type="HAMAP" id="MF_00201">
    <property type="entry name" value="RecO"/>
    <property type="match status" value="1"/>
</dbReference>
<dbReference type="InterPro" id="IPR037278">
    <property type="entry name" value="ARFGAP/RecO"/>
</dbReference>
<dbReference type="InterPro" id="IPR022572">
    <property type="entry name" value="DNA_rep/recomb_RecO_N"/>
</dbReference>
<dbReference type="InterPro" id="IPR012340">
    <property type="entry name" value="NA-bd_OB-fold"/>
</dbReference>
<dbReference type="InterPro" id="IPR003717">
    <property type="entry name" value="RecO"/>
</dbReference>
<dbReference type="InterPro" id="IPR042242">
    <property type="entry name" value="RecO_C"/>
</dbReference>
<dbReference type="NCBIfam" id="TIGR00613">
    <property type="entry name" value="reco"/>
    <property type="match status" value="1"/>
</dbReference>
<dbReference type="PANTHER" id="PTHR33991">
    <property type="entry name" value="DNA REPAIR PROTEIN RECO"/>
    <property type="match status" value="1"/>
</dbReference>
<dbReference type="PANTHER" id="PTHR33991:SF1">
    <property type="entry name" value="DNA REPAIR PROTEIN RECO"/>
    <property type="match status" value="1"/>
</dbReference>
<dbReference type="Pfam" id="PF02565">
    <property type="entry name" value="RecO_C"/>
    <property type="match status" value="1"/>
</dbReference>
<dbReference type="Pfam" id="PF11967">
    <property type="entry name" value="RecO_N"/>
    <property type="match status" value="1"/>
</dbReference>
<dbReference type="SUPFAM" id="SSF57863">
    <property type="entry name" value="ArfGap/RecO-like zinc finger"/>
    <property type="match status" value="1"/>
</dbReference>
<dbReference type="SUPFAM" id="SSF50249">
    <property type="entry name" value="Nucleic acid-binding proteins"/>
    <property type="match status" value="1"/>
</dbReference>
<feature type="chain" id="PRO_1000012155" description="DNA repair protein RecO">
    <location>
        <begin position="1"/>
        <end position="273"/>
    </location>
</feature>
<keyword id="KW-0227">DNA damage</keyword>
<keyword id="KW-0233">DNA recombination</keyword>
<keyword id="KW-0234">DNA repair</keyword>
<keyword id="KW-1185">Reference proteome</keyword>
<reference key="1">
    <citation type="journal article" date="2007" name="Nat. Biotechnol.">
        <title>Complete genome sequence of the erythromycin-producing bacterium Saccharopolyspora erythraea NRRL23338.</title>
        <authorList>
            <person name="Oliynyk M."/>
            <person name="Samborskyy M."/>
            <person name="Lester J.B."/>
            <person name="Mironenko T."/>
            <person name="Scott N."/>
            <person name="Dickens S."/>
            <person name="Haydock S.F."/>
            <person name="Leadlay P.F."/>
        </authorList>
    </citation>
    <scope>NUCLEOTIDE SEQUENCE [LARGE SCALE GENOMIC DNA]</scope>
    <source>
        <strain>ATCC 11635 / DSM 40517 / JCM 4748 / NBRC 13426 / NCIMB 8594 / NRRL 2338</strain>
    </source>
</reference>
<accession>A4F9T9</accession>
<comment type="function">
    <text evidence="1">Involved in DNA repair and RecF pathway recombination.</text>
</comment>
<comment type="similarity">
    <text evidence="1">Belongs to the RecO family.</text>
</comment>
<sequence length="273" mass="29638">MSLYRDSAVVLRVQKLGEADRIITLLTRRYGKVRAVAKGVRRTTSRFGARVEPFCHIDVQLYTGRTLDVITQVQTLDAFGAHIVDDYQRYTSACAVLETVDRLAAEEGEPVLRLYLLATGALRALAGRERDSSLVLDAFLLRAMSFAGWAPALDECARCNARGPHAAFNVAAGGAVCAECRPAGSVRPSAATLPLLEALLHGDWAVAEAATTPVRREGSGLIAAHLQWHMERQLRSLPLVERSEWKVPEIIRERAAELGATQDPVASPAGEDG</sequence>
<proteinExistence type="inferred from homology"/>
<evidence type="ECO:0000255" key="1">
    <source>
        <dbReference type="HAMAP-Rule" id="MF_00201"/>
    </source>
</evidence>